<sequence>MTSYENHQALHGLTLGKSTDYRDVYDASLLQPVPRSLNRDPLGLRADALPFHGADIWTMYELSWLNRNGLPQVAIGQVEINATSVNLVESKSFKLYLNSFNQTQFESLEAVRETLERDLRACAQGDVSVTLRRLEDVEGEPVARFSGDCIDNQDINITDYEFDAALLSGAAGEETVEETLVSHLLKSNCLITHQPDWGSVQIHYRGPKICREKLLRYLVSFRHHNEFHEQCVERIFNDITRFCQPEQLSVYARYTRRGGLDINPWRSNGDFTPATGRLARQ</sequence>
<organism>
    <name type="scientific">Cronobacter sakazakii (strain ATCC BAA-894)</name>
    <name type="common">Enterobacter sakazakii</name>
    <dbReference type="NCBI Taxonomy" id="290339"/>
    <lineage>
        <taxon>Bacteria</taxon>
        <taxon>Pseudomonadati</taxon>
        <taxon>Pseudomonadota</taxon>
        <taxon>Gammaproteobacteria</taxon>
        <taxon>Enterobacterales</taxon>
        <taxon>Enterobacteriaceae</taxon>
        <taxon>Cronobacter</taxon>
    </lineage>
</organism>
<proteinExistence type="inferred from homology"/>
<comment type="function">
    <text evidence="1">Catalyzes the NADPH-dependent reduction of 7-cyano-7-deazaguanine (preQ0) to 7-aminomethyl-7-deazaguanine (preQ1).</text>
</comment>
<comment type="catalytic activity">
    <reaction evidence="1">
        <text>7-aminomethyl-7-carbaguanine + 2 NADP(+) = 7-cyano-7-deazaguanine + 2 NADPH + 3 H(+)</text>
        <dbReference type="Rhea" id="RHEA:13409"/>
        <dbReference type="ChEBI" id="CHEBI:15378"/>
        <dbReference type="ChEBI" id="CHEBI:45075"/>
        <dbReference type="ChEBI" id="CHEBI:57783"/>
        <dbReference type="ChEBI" id="CHEBI:58349"/>
        <dbReference type="ChEBI" id="CHEBI:58703"/>
        <dbReference type="EC" id="1.7.1.13"/>
    </reaction>
</comment>
<comment type="pathway">
    <text evidence="1">tRNA modification; tRNA-queuosine biosynthesis.</text>
</comment>
<comment type="subunit">
    <text evidence="1">Homodimer.</text>
</comment>
<comment type="subcellular location">
    <subcellularLocation>
        <location evidence="1">Cytoplasm</location>
    </subcellularLocation>
</comment>
<comment type="similarity">
    <text evidence="1">Belongs to the GTP cyclohydrolase I family. QueF type 2 subfamily.</text>
</comment>
<name>QUEF_CROS8</name>
<feature type="chain" id="PRO_1000062342" description="NADPH-dependent 7-cyano-7-deazaguanine reductase">
    <location>
        <begin position="1"/>
        <end position="281"/>
    </location>
</feature>
<feature type="active site" description="Thioimide intermediate" evidence="1">
    <location>
        <position position="189"/>
    </location>
</feature>
<feature type="active site" description="Proton donor" evidence="1">
    <location>
        <position position="196"/>
    </location>
</feature>
<feature type="binding site" evidence="1">
    <location>
        <begin position="88"/>
        <end position="90"/>
    </location>
    <ligand>
        <name>substrate</name>
    </ligand>
</feature>
<feature type="binding site" evidence="1">
    <location>
        <begin position="90"/>
        <end position="91"/>
    </location>
    <ligand>
        <name>NADPH</name>
        <dbReference type="ChEBI" id="CHEBI:57783"/>
    </ligand>
</feature>
<feature type="binding site" evidence="1">
    <location>
        <begin position="228"/>
        <end position="229"/>
    </location>
    <ligand>
        <name>substrate</name>
    </ligand>
</feature>
<feature type="binding site" evidence="1">
    <location>
        <begin position="257"/>
        <end position="258"/>
    </location>
    <ligand>
        <name>NADPH</name>
        <dbReference type="ChEBI" id="CHEBI:57783"/>
    </ligand>
</feature>
<accession>A7MR08</accession>
<dbReference type="EC" id="1.7.1.13" evidence="1"/>
<dbReference type="EMBL" id="CP000783">
    <property type="protein sequence ID" value="ABU75803.1"/>
    <property type="molecule type" value="Genomic_DNA"/>
</dbReference>
<dbReference type="RefSeq" id="WP_012123911.1">
    <property type="nucleotide sequence ID" value="NC_009778.1"/>
</dbReference>
<dbReference type="SMR" id="A7MR08"/>
<dbReference type="KEGG" id="esa:ESA_00511"/>
<dbReference type="PATRIC" id="fig|290339.8.peg.460"/>
<dbReference type="HOGENOM" id="CLU_054738_0_0_6"/>
<dbReference type="UniPathway" id="UPA00392"/>
<dbReference type="Proteomes" id="UP000000260">
    <property type="component" value="Chromosome"/>
</dbReference>
<dbReference type="GO" id="GO:0005737">
    <property type="term" value="C:cytoplasm"/>
    <property type="evidence" value="ECO:0007669"/>
    <property type="project" value="UniProtKB-SubCell"/>
</dbReference>
<dbReference type="GO" id="GO:0033739">
    <property type="term" value="F:preQ1 synthase activity"/>
    <property type="evidence" value="ECO:0007669"/>
    <property type="project" value="UniProtKB-UniRule"/>
</dbReference>
<dbReference type="GO" id="GO:0008616">
    <property type="term" value="P:queuosine biosynthetic process"/>
    <property type="evidence" value="ECO:0007669"/>
    <property type="project" value="UniProtKB-UniRule"/>
</dbReference>
<dbReference type="GO" id="GO:0006400">
    <property type="term" value="P:tRNA modification"/>
    <property type="evidence" value="ECO:0007669"/>
    <property type="project" value="UniProtKB-UniRule"/>
</dbReference>
<dbReference type="Gene3D" id="3.30.1130.10">
    <property type="match status" value="2"/>
</dbReference>
<dbReference type="HAMAP" id="MF_00817">
    <property type="entry name" value="QueF_type2"/>
    <property type="match status" value="1"/>
</dbReference>
<dbReference type="InterPro" id="IPR043133">
    <property type="entry name" value="GTP-CH-I_C/QueF"/>
</dbReference>
<dbReference type="InterPro" id="IPR050084">
    <property type="entry name" value="NADPH_dep_7-cyano-7-deazaG_red"/>
</dbReference>
<dbReference type="InterPro" id="IPR029500">
    <property type="entry name" value="QueF"/>
</dbReference>
<dbReference type="InterPro" id="IPR029139">
    <property type="entry name" value="QueF_N"/>
</dbReference>
<dbReference type="InterPro" id="IPR016428">
    <property type="entry name" value="QueF_type2"/>
</dbReference>
<dbReference type="NCBIfam" id="TIGR03138">
    <property type="entry name" value="QueF"/>
    <property type="match status" value="1"/>
</dbReference>
<dbReference type="PANTHER" id="PTHR34354">
    <property type="entry name" value="NADPH-DEPENDENT 7-CYANO-7-DEAZAGUANINE REDUCTASE"/>
    <property type="match status" value="1"/>
</dbReference>
<dbReference type="PANTHER" id="PTHR34354:SF1">
    <property type="entry name" value="NADPH-DEPENDENT 7-CYANO-7-DEAZAGUANINE REDUCTASE"/>
    <property type="match status" value="1"/>
</dbReference>
<dbReference type="Pfam" id="PF14489">
    <property type="entry name" value="QueF"/>
    <property type="match status" value="1"/>
</dbReference>
<dbReference type="Pfam" id="PF14819">
    <property type="entry name" value="QueF_N"/>
    <property type="match status" value="1"/>
</dbReference>
<dbReference type="PIRSF" id="PIRSF004750">
    <property type="entry name" value="Nitrile_oxidored_YqcD_prd"/>
    <property type="match status" value="1"/>
</dbReference>
<dbReference type="SUPFAM" id="SSF55620">
    <property type="entry name" value="Tetrahydrobiopterin biosynthesis enzymes-like"/>
    <property type="match status" value="1"/>
</dbReference>
<evidence type="ECO:0000255" key="1">
    <source>
        <dbReference type="HAMAP-Rule" id="MF_00817"/>
    </source>
</evidence>
<gene>
    <name evidence="1" type="primary">queF</name>
    <name type="ordered locus">ESA_00511</name>
</gene>
<reference key="1">
    <citation type="journal article" date="2010" name="PLoS ONE">
        <title>Genome sequence of Cronobacter sakazakii BAA-894 and comparative genomic hybridization analysis with other Cronobacter species.</title>
        <authorList>
            <person name="Kucerova E."/>
            <person name="Clifton S.W."/>
            <person name="Xia X.Q."/>
            <person name="Long F."/>
            <person name="Porwollik S."/>
            <person name="Fulton L."/>
            <person name="Fronick C."/>
            <person name="Minx P."/>
            <person name="Kyung K."/>
            <person name="Warren W."/>
            <person name="Fulton R."/>
            <person name="Feng D."/>
            <person name="Wollam A."/>
            <person name="Shah N."/>
            <person name="Bhonagiri V."/>
            <person name="Nash W.E."/>
            <person name="Hallsworth-Pepin K."/>
            <person name="Wilson R.K."/>
            <person name="McClelland M."/>
            <person name="Forsythe S.J."/>
        </authorList>
    </citation>
    <scope>NUCLEOTIDE SEQUENCE [LARGE SCALE GENOMIC DNA]</scope>
    <source>
        <strain>ATCC BAA-894</strain>
    </source>
</reference>
<protein>
    <recommendedName>
        <fullName evidence="1">NADPH-dependent 7-cyano-7-deazaguanine reductase</fullName>
        <ecNumber evidence="1">1.7.1.13</ecNumber>
    </recommendedName>
    <alternativeName>
        <fullName evidence="1">7-cyano-7-carbaguanine reductase</fullName>
    </alternativeName>
    <alternativeName>
        <fullName evidence="1">NADPH-dependent nitrile oxidoreductase</fullName>
    </alternativeName>
    <alternativeName>
        <fullName evidence="1">PreQ(0) reductase</fullName>
    </alternativeName>
</protein>
<keyword id="KW-0963">Cytoplasm</keyword>
<keyword id="KW-0521">NADP</keyword>
<keyword id="KW-0560">Oxidoreductase</keyword>
<keyword id="KW-0671">Queuosine biosynthesis</keyword>
<keyword id="KW-1185">Reference proteome</keyword>